<keyword id="KW-0963">Cytoplasm</keyword>
<keyword id="KW-0903">Direct protein sequencing</keyword>
<keyword id="KW-0597">Phosphoprotein</keyword>
<keyword id="KW-1185">Reference proteome</keyword>
<keyword id="KW-0677">Repeat</keyword>
<keyword id="KW-0694">RNA-binding</keyword>
<proteinExistence type="evidence at protein level"/>
<reference key="1">
    <citation type="journal article" date="2002" name="Nature">
        <title>The genome sequence of Schizosaccharomyces pombe.</title>
        <authorList>
            <person name="Wood V."/>
            <person name="Gwilliam R."/>
            <person name="Rajandream M.A."/>
            <person name="Lyne M.H."/>
            <person name="Lyne R."/>
            <person name="Stewart A."/>
            <person name="Sgouros J.G."/>
            <person name="Peat N."/>
            <person name="Hayles J."/>
            <person name="Baker S.G."/>
            <person name="Basham D."/>
            <person name="Bowman S."/>
            <person name="Brooks K."/>
            <person name="Brown D."/>
            <person name="Brown S."/>
            <person name="Chillingworth T."/>
            <person name="Churcher C.M."/>
            <person name="Collins M."/>
            <person name="Connor R."/>
            <person name="Cronin A."/>
            <person name="Davis P."/>
            <person name="Feltwell T."/>
            <person name="Fraser A."/>
            <person name="Gentles S."/>
            <person name="Goble A."/>
            <person name="Hamlin N."/>
            <person name="Harris D.E."/>
            <person name="Hidalgo J."/>
            <person name="Hodgson G."/>
            <person name="Holroyd S."/>
            <person name="Hornsby T."/>
            <person name="Howarth S."/>
            <person name="Huckle E.J."/>
            <person name="Hunt S."/>
            <person name="Jagels K."/>
            <person name="James K.D."/>
            <person name="Jones L."/>
            <person name="Jones M."/>
            <person name="Leather S."/>
            <person name="McDonald S."/>
            <person name="McLean J."/>
            <person name="Mooney P."/>
            <person name="Moule S."/>
            <person name="Mungall K.L."/>
            <person name="Murphy L.D."/>
            <person name="Niblett D."/>
            <person name="Odell C."/>
            <person name="Oliver K."/>
            <person name="O'Neil S."/>
            <person name="Pearson D."/>
            <person name="Quail M.A."/>
            <person name="Rabbinowitsch E."/>
            <person name="Rutherford K.M."/>
            <person name="Rutter S."/>
            <person name="Saunders D."/>
            <person name="Seeger K."/>
            <person name="Sharp S."/>
            <person name="Skelton J."/>
            <person name="Simmonds M.N."/>
            <person name="Squares R."/>
            <person name="Squares S."/>
            <person name="Stevens K."/>
            <person name="Taylor K."/>
            <person name="Taylor R.G."/>
            <person name="Tivey A."/>
            <person name="Walsh S.V."/>
            <person name="Warren T."/>
            <person name="Whitehead S."/>
            <person name="Woodward J.R."/>
            <person name="Volckaert G."/>
            <person name="Aert R."/>
            <person name="Robben J."/>
            <person name="Grymonprez B."/>
            <person name="Weltjens I."/>
            <person name="Vanstreels E."/>
            <person name="Rieger M."/>
            <person name="Schaefer M."/>
            <person name="Mueller-Auer S."/>
            <person name="Gabel C."/>
            <person name="Fuchs M."/>
            <person name="Duesterhoeft A."/>
            <person name="Fritzc C."/>
            <person name="Holzer E."/>
            <person name="Moestl D."/>
            <person name="Hilbert H."/>
            <person name="Borzym K."/>
            <person name="Langer I."/>
            <person name="Beck A."/>
            <person name="Lehrach H."/>
            <person name="Reinhardt R."/>
            <person name="Pohl T.M."/>
            <person name="Eger P."/>
            <person name="Zimmermann W."/>
            <person name="Wedler H."/>
            <person name="Wambutt R."/>
            <person name="Purnelle B."/>
            <person name="Goffeau A."/>
            <person name="Cadieu E."/>
            <person name="Dreano S."/>
            <person name="Gloux S."/>
            <person name="Lelaure V."/>
            <person name="Mottier S."/>
            <person name="Galibert F."/>
            <person name="Aves S.J."/>
            <person name="Xiang Z."/>
            <person name="Hunt C."/>
            <person name="Moore K."/>
            <person name="Hurst S.M."/>
            <person name="Lucas M."/>
            <person name="Rochet M."/>
            <person name="Gaillardin C."/>
            <person name="Tallada V.A."/>
            <person name="Garzon A."/>
            <person name="Thode G."/>
            <person name="Daga R.R."/>
            <person name="Cruzado L."/>
            <person name="Jimenez J."/>
            <person name="Sanchez M."/>
            <person name="del Rey F."/>
            <person name="Benito J."/>
            <person name="Dominguez A."/>
            <person name="Revuelta J.L."/>
            <person name="Moreno S."/>
            <person name="Armstrong J."/>
            <person name="Forsburg S.L."/>
            <person name="Cerutti L."/>
            <person name="Lowe T."/>
            <person name="McCombie W.R."/>
            <person name="Paulsen I."/>
            <person name="Potashkin J."/>
            <person name="Shpakovski G.V."/>
            <person name="Ussery D."/>
            <person name="Barrell B.G."/>
            <person name="Nurse P."/>
        </authorList>
    </citation>
    <scope>NUCLEOTIDE SEQUENCE [LARGE SCALE GENOMIC DNA]</scope>
    <source>
        <strain>972 / ATCC 24843</strain>
    </source>
</reference>
<reference key="2">
    <citation type="journal article" date="2006" name="Mol. Biol. Cell">
        <title>Cip1 and Cip2 are novel RNA-recognition-motif proteins that counteract Csx1 function during oxidative stress.</title>
        <authorList>
            <person name="Martin V."/>
            <person name="Rodriguez-Gabriel M.A."/>
            <person name="McDonald W.H."/>
            <person name="Watt S."/>
            <person name="Yates J.R. III"/>
            <person name="Baehler J."/>
            <person name="Russell P."/>
        </authorList>
    </citation>
    <scope>PARTIAL PROTEIN SEQUENCE</scope>
    <scope>FUNCTION</scope>
    <scope>INTERACTION WITH CSX1</scope>
    <scope>SUBCELLULAR LOCATION</scope>
    <scope>PHOSPHORYLATION</scope>
</reference>
<reference key="3">
    <citation type="journal article" date="2006" name="Nat. Biotechnol.">
        <title>ORFeome cloning and global analysis of protein localization in the fission yeast Schizosaccharomyces pombe.</title>
        <authorList>
            <person name="Matsuyama A."/>
            <person name="Arai R."/>
            <person name="Yashiroda Y."/>
            <person name="Shirai A."/>
            <person name="Kamata A."/>
            <person name="Sekido S."/>
            <person name="Kobayashi Y."/>
            <person name="Hashimoto A."/>
            <person name="Hamamoto M."/>
            <person name="Hiraoka Y."/>
            <person name="Horinouchi S."/>
            <person name="Yoshida M."/>
        </authorList>
    </citation>
    <scope>SUBCELLULAR LOCATION [LARGE SCALE ANALYSIS]</scope>
</reference>
<reference key="4">
    <citation type="journal article" date="2008" name="J. Proteome Res.">
        <title>Phosphoproteome analysis of fission yeast.</title>
        <authorList>
            <person name="Wilson-Grady J.T."/>
            <person name="Villen J."/>
            <person name="Gygi S.P."/>
        </authorList>
    </citation>
    <scope>PHOSPHORYLATION [LARGE SCALE ANALYSIS] AT SER-37; SER-41; SER-49; SER-86; SER-141; SER-397; SER-401; SER-427; THR-431; SER-435; SER-456 AND SER-466</scope>
    <scope>IDENTIFICATION BY MASS SPECTROMETRY</scope>
</reference>
<accession>O42923</accession>
<gene>
    <name type="primary">cip1</name>
    <name type="ORF">SPBC16A3.18</name>
</gene>
<dbReference type="EMBL" id="CU329671">
    <property type="protein sequence ID" value="CAA16869.1"/>
    <property type="molecule type" value="Genomic_DNA"/>
</dbReference>
<dbReference type="PIR" id="T39534">
    <property type="entry name" value="T39534"/>
</dbReference>
<dbReference type="RefSeq" id="NP_596771.1">
    <property type="nucleotide sequence ID" value="NM_001023792.2"/>
</dbReference>
<dbReference type="SMR" id="O42923"/>
<dbReference type="BioGRID" id="276373">
    <property type="interactions" value="40"/>
</dbReference>
<dbReference type="FunCoup" id="O42923">
    <property type="interactions" value="306"/>
</dbReference>
<dbReference type="IntAct" id="O42923">
    <property type="interactions" value="3"/>
</dbReference>
<dbReference type="STRING" id="284812.O42923"/>
<dbReference type="iPTMnet" id="O42923"/>
<dbReference type="PaxDb" id="4896-SPBC16A3.18.1"/>
<dbReference type="EnsemblFungi" id="SPBC16A3.18.1">
    <property type="protein sequence ID" value="SPBC16A3.18.1:pep"/>
    <property type="gene ID" value="SPBC16A3.18"/>
</dbReference>
<dbReference type="GeneID" id="2539823"/>
<dbReference type="KEGG" id="spo:2539823"/>
<dbReference type="PomBase" id="SPBC16A3.18">
    <property type="gene designation" value="cip1"/>
</dbReference>
<dbReference type="VEuPathDB" id="FungiDB:SPBC16A3.18"/>
<dbReference type="eggNOG" id="KOG0108">
    <property type="taxonomic scope" value="Eukaryota"/>
</dbReference>
<dbReference type="HOGENOM" id="CLU_600138_0_0_1"/>
<dbReference type="InParanoid" id="O42923"/>
<dbReference type="OMA" id="VRTNDSH"/>
<dbReference type="PRO" id="PR:O42923"/>
<dbReference type="Proteomes" id="UP000002485">
    <property type="component" value="Chromosome II"/>
</dbReference>
<dbReference type="GO" id="GO:0005737">
    <property type="term" value="C:cytoplasm"/>
    <property type="evidence" value="ECO:0000314"/>
    <property type="project" value="PomBase"/>
</dbReference>
<dbReference type="GO" id="GO:0005829">
    <property type="term" value="C:cytosol"/>
    <property type="evidence" value="ECO:0007005"/>
    <property type="project" value="PomBase"/>
</dbReference>
<dbReference type="GO" id="GO:0005634">
    <property type="term" value="C:nucleus"/>
    <property type="evidence" value="ECO:0000318"/>
    <property type="project" value="GO_Central"/>
</dbReference>
<dbReference type="GO" id="GO:0071014">
    <property type="term" value="C:post-mRNA release spliceosomal complex"/>
    <property type="evidence" value="ECO:0000314"/>
    <property type="project" value="PomBase"/>
</dbReference>
<dbReference type="GO" id="GO:0003729">
    <property type="term" value="F:mRNA binding"/>
    <property type="evidence" value="ECO:0000318"/>
    <property type="project" value="GO_Central"/>
</dbReference>
<dbReference type="CDD" id="cd12253">
    <property type="entry name" value="RRM_PIN4_like"/>
    <property type="match status" value="1"/>
</dbReference>
<dbReference type="FunFam" id="3.30.70.330:FF:000183">
    <property type="entry name" value="R3H domain containing protein"/>
    <property type="match status" value="1"/>
</dbReference>
<dbReference type="Gene3D" id="3.30.70.330">
    <property type="match status" value="1"/>
</dbReference>
<dbReference type="InterPro" id="IPR050502">
    <property type="entry name" value="Euk_RNA-bind_prot"/>
</dbReference>
<dbReference type="InterPro" id="IPR012677">
    <property type="entry name" value="Nucleotide-bd_a/b_plait_sf"/>
</dbReference>
<dbReference type="InterPro" id="IPR034186">
    <property type="entry name" value="PIN4-like_RRM"/>
</dbReference>
<dbReference type="InterPro" id="IPR035979">
    <property type="entry name" value="RBD_domain_sf"/>
</dbReference>
<dbReference type="InterPro" id="IPR000504">
    <property type="entry name" value="RRM_dom"/>
</dbReference>
<dbReference type="PANTHER" id="PTHR48025">
    <property type="entry name" value="OS02G0815200 PROTEIN"/>
    <property type="match status" value="1"/>
</dbReference>
<dbReference type="PANTHER" id="PTHR48025:SF1">
    <property type="entry name" value="RRM DOMAIN-CONTAINING PROTEIN"/>
    <property type="match status" value="1"/>
</dbReference>
<dbReference type="Pfam" id="PF00076">
    <property type="entry name" value="RRM_1"/>
    <property type="match status" value="1"/>
</dbReference>
<dbReference type="SMART" id="SM00360">
    <property type="entry name" value="RRM"/>
    <property type="match status" value="1"/>
</dbReference>
<dbReference type="SUPFAM" id="SSF54928">
    <property type="entry name" value="RNA-binding domain, RBD"/>
    <property type="match status" value="1"/>
</dbReference>
<dbReference type="PROSITE" id="PS50102">
    <property type="entry name" value="RRM"/>
    <property type="match status" value="1"/>
</dbReference>
<protein>
    <recommendedName>
        <fullName>RNA-binding post-transcriptional regulator cip1</fullName>
    </recommendedName>
    <alternativeName>
        <fullName>Csx1-interacting protein 1</fullName>
    </alternativeName>
</protein>
<comment type="function">
    <text evidence="3">Regulates global gene expression after oxidative stress. Interacts and stabilizes mRNAs and may regulate their transition between different cytoplasmic components after oxidative stress.</text>
</comment>
<comment type="subunit">
    <text evidence="3">Interacts with csx1.</text>
</comment>
<comment type="subcellular location">
    <subcellularLocation>
        <location evidence="3 4">Cytoplasm</location>
    </subcellularLocation>
</comment>
<comment type="PTM">
    <text evidence="3 5">Phosphorylated by sty1.</text>
</comment>
<name>CIP1_SCHPO</name>
<feature type="chain" id="PRO_0000255601" description="RNA-binding post-transcriptional regulator cip1">
    <location>
        <begin position="1"/>
        <end position="490"/>
    </location>
</feature>
<feature type="domain" description="RRM" evidence="1">
    <location>
        <begin position="202"/>
        <end position="280"/>
    </location>
</feature>
<feature type="region of interest" description="Disordered" evidence="2">
    <location>
        <begin position="16"/>
        <end position="63"/>
    </location>
</feature>
<feature type="region of interest" description="Disordered" evidence="2">
    <location>
        <begin position="76"/>
        <end position="97"/>
    </location>
</feature>
<feature type="region of interest" description="Disordered" evidence="2">
    <location>
        <begin position="138"/>
        <end position="199"/>
    </location>
</feature>
<feature type="region of interest" description="Disordered" evidence="2">
    <location>
        <begin position="457"/>
        <end position="490"/>
    </location>
</feature>
<feature type="compositionally biased region" description="Polar residues" evidence="2">
    <location>
        <begin position="34"/>
        <end position="62"/>
    </location>
</feature>
<feature type="compositionally biased region" description="Low complexity" evidence="2">
    <location>
        <begin position="76"/>
        <end position="88"/>
    </location>
</feature>
<feature type="compositionally biased region" description="Low complexity" evidence="2">
    <location>
        <begin position="141"/>
        <end position="160"/>
    </location>
</feature>
<feature type="compositionally biased region" description="Polar residues" evidence="2">
    <location>
        <begin position="164"/>
        <end position="192"/>
    </location>
</feature>
<feature type="modified residue" description="Phosphoserine" evidence="5">
    <location>
        <position position="37"/>
    </location>
</feature>
<feature type="modified residue" description="Phosphoserine" evidence="5">
    <location>
        <position position="41"/>
    </location>
</feature>
<feature type="modified residue" description="Phosphoserine" evidence="5">
    <location>
        <position position="49"/>
    </location>
</feature>
<feature type="modified residue" description="Phosphoserine" evidence="5">
    <location>
        <position position="86"/>
    </location>
</feature>
<feature type="modified residue" description="Phosphoserine" evidence="5">
    <location>
        <position position="141"/>
    </location>
</feature>
<feature type="modified residue" description="Phosphoserine" evidence="5">
    <location>
        <position position="397"/>
    </location>
</feature>
<feature type="modified residue" description="Phosphoserine" evidence="5">
    <location>
        <position position="401"/>
    </location>
</feature>
<feature type="modified residue" description="Phosphoserine" evidence="5">
    <location>
        <position position="427"/>
    </location>
</feature>
<feature type="modified residue" description="Phosphothreonine" evidence="5">
    <location>
        <position position="431"/>
    </location>
</feature>
<feature type="modified residue" description="Phosphoserine" evidence="5">
    <location>
        <position position="435"/>
    </location>
</feature>
<feature type="modified residue" description="Phosphoserine" evidence="5">
    <location>
        <position position="456"/>
    </location>
</feature>
<feature type="modified residue" description="Phosphoserine" evidence="5">
    <location>
        <position position="466"/>
    </location>
</feature>
<sequence>MPNEIFPWKIRVDESRGLAGNSGTKKSNHEALSRLQSPLNSPKLQPIGSPQASRKTSGSGSSAPLYPKWSGALSLASSRAASPAPSDSFPTFGYSQLGGLENSSKGSALFNSANSIGTPYLSSRNSNSANEASAMAFHNVSPPSGAESSSESKSFSASGKGNKADTSAEPSLDAFNSTQIKAGSTANSNSTPVEPGEDTIPTAIVVKNIPFSLEKDTLLDHFKQLGIPRPYAFNYHYDNGIFRGLAFANFYRPEEAQVVVQTLNGYEINGRRLRVEWKRQLPAAEREKVEKAKKRQAEERRRKQQYKMFEVSFTDQGLNLNDTGTLETYSRLLLFAHQCIPSREITFETTSKDGNLLNAIRIFCLYFDLDYYARPNGEVLKLVVTHPNKKNTSVSQSQPASPNLRFNMPAPLATRFLQEHSLNGTKSAPITPPPSFAVPLTNQLRSIDDKIYGNESPLQKASTLSSPFNSKNDNDASTSASKQSFGVSHF</sequence>
<evidence type="ECO:0000255" key="1">
    <source>
        <dbReference type="PROSITE-ProRule" id="PRU00176"/>
    </source>
</evidence>
<evidence type="ECO:0000256" key="2">
    <source>
        <dbReference type="SAM" id="MobiDB-lite"/>
    </source>
</evidence>
<evidence type="ECO:0000269" key="3">
    <source>
    </source>
</evidence>
<evidence type="ECO:0000269" key="4">
    <source>
    </source>
</evidence>
<evidence type="ECO:0000269" key="5">
    <source>
    </source>
</evidence>
<organism>
    <name type="scientific">Schizosaccharomyces pombe (strain 972 / ATCC 24843)</name>
    <name type="common">Fission yeast</name>
    <dbReference type="NCBI Taxonomy" id="284812"/>
    <lineage>
        <taxon>Eukaryota</taxon>
        <taxon>Fungi</taxon>
        <taxon>Dikarya</taxon>
        <taxon>Ascomycota</taxon>
        <taxon>Taphrinomycotina</taxon>
        <taxon>Schizosaccharomycetes</taxon>
        <taxon>Schizosaccharomycetales</taxon>
        <taxon>Schizosaccharomycetaceae</taxon>
        <taxon>Schizosaccharomyces</taxon>
    </lineage>
</organism>